<accession>Q5NG86</accession>
<feature type="chain" id="PRO_0000095790" description="Translation initiation factor IF-1">
    <location>
        <begin position="1"/>
        <end position="72"/>
    </location>
</feature>
<feature type="domain" description="S1-like" evidence="1">
    <location>
        <begin position="1"/>
        <end position="72"/>
    </location>
</feature>
<comment type="function">
    <text evidence="1">One of the essential components for the initiation of protein synthesis. Stabilizes the binding of IF-2 and IF-3 on the 30S subunit to which N-formylmethionyl-tRNA(fMet) subsequently binds. Helps modulate mRNA selection, yielding the 30S pre-initiation complex (PIC). Upon addition of the 50S ribosomal subunit IF-1, IF-2 and IF-3 are released leaving the mature 70S translation initiation complex.</text>
</comment>
<comment type="subunit">
    <text evidence="1">Component of the 30S ribosomal translation pre-initiation complex which assembles on the 30S ribosome in the order IF-2 and IF-3, IF-1 and N-formylmethionyl-tRNA(fMet); mRNA recruitment can occur at any time during PIC assembly.</text>
</comment>
<comment type="subcellular location">
    <subcellularLocation>
        <location evidence="1">Cytoplasm</location>
    </subcellularLocation>
</comment>
<comment type="similarity">
    <text evidence="1">Belongs to the IF-1 family.</text>
</comment>
<sequence>MAKEDCIEMEGVVLEALPNTMFRVELENGRIVTAHISGKMRKNYIRILTGDKVVVEITPYDLTKGRIKFRSK</sequence>
<evidence type="ECO:0000255" key="1">
    <source>
        <dbReference type="HAMAP-Rule" id="MF_00075"/>
    </source>
</evidence>
<reference key="1">
    <citation type="journal article" date="2005" name="Nat. Genet.">
        <title>The complete genome sequence of Francisella tularensis, the causative agent of tularemia.</title>
        <authorList>
            <person name="Larsson P."/>
            <person name="Oyston P.C.F."/>
            <person name="Chain P."/>
            <person name="Chu M.C."/>
            <person name="Duffield M."/>
            <person name="Fuxelius H.-H."/>
            <person name="Garcia E."/>
            <person name="Haelltorp G."/>
            <person name="Johansson D."/>
            <person name="Isherwood K.E."/>
            <person name="Karp P.D."/>
            <person name="Larsson E."/>
            <person name="Liu Y."/>
            <person name="Michell S."/>
            <person name="Prior J."/>
            <person name="Prior R."/>
            <person name="Malfatti S."/>
            <person name="Sjoestedt A."/>
            <person name="Svensson K."/>
            <person name="Thompson N."/>
            <person name="Vergez L."/>
            <person name="Wagg J.K."/>
            <person name="Wren B.W."/>
            <person name="Lindler L.E."/>
            <person name="Andersson S.G.E."/>
            <person name="Forsman M."/>
            <person name="Titball R.W."/>
        </authorList>
    </citation>
    <scope>NUCLEOTIDE SEQUENCE [LARGE SCALE GENOMIC DNA]</scope>
    <source>
        <strain>SCHU S4 / Schu 4</strain>
    </source>
</reference>
<dbReference type="EMBL" id="AJ749949">
    <property type="protein sequence ID" value="CAG45599.1"/>
    <property type="molecule type" value="Genomic_DNA"/>
</dbReference>
<dbReference type="RefSeq" id="WP_003016350.1">
    <property type="nucleotide sequence ID" value="NZ_CP010290.1"/>
</dbReference>
<dbReference type="RefSeq" id="YP_169956.1">
    <property type="nucleotide sequence ID" value="NC_006570.2"/>
</dbReference>
<dbReference type="SMR" id="Q5NG86"/>
<dbReference type="STRING" id="177416.FTT_0966"/>
<dbReference type="DNASU" id="3191552"/>
<dbReference type="EnsemblBacteria" id="CAG45599">
    <property type="protein sequence ID" value="CAG45599"/>
    <property type="gene ID" value="FTT_0966"/>
</dbReference>
<dbReference type="KEGG" id="ftu:FTT_0966"/>
<dbReference type="eggNOG" id="COG0361">
    <property type="taxonomic scope" value="Bacteria"/>
</dbReference>
<dbReference type="OrthoDB" id="9803250at2"/>
<dbReference type="Proteomes" id="UP000001174">
    <property type="component" value="Chromosome"/>
</dbReference>
<dbReference type="GO" id="GO:0005829">
    <property type="term" value="C:cytosol"/>
    <property type="evidence" value="ECO:0007669"/>
    <property type="project" value="TreeGrafter"/>
</dbReference>
<dbReference type="GO" id="GO:0043022">
    <property type="term" value="F:ribosome binding"/>
    <property type="evidence" value="ECO:0007669"/>
    <property type="project" value="UniProtKB-UniRule"/>
</dbReference>
<dbReference type="GO" id="GO:0019843">
    <property type="term" value="F:rRNA binding"/>
    <property type="evidence" value="ECO:0007669"/>
    <property type="project" value="UniProtKB-UniRule"/>
</dbReference>
<dbReference type="GO" id="GO:0003743">
    <property type="term" value="F:translation initiation factor activity"/>
    <property type="evidence" value="ECO:0007669"/>
    <property type="project" value="UniProtKB-UniRule"/>
</dbReference>
<dbReference type="CDD" id="cd04451">
    <property type="entry name" value="S1_IF1"/>
    <property type="match status" value="1"/>
</dbReference>
<dbReference type="FunFam" id="2.40.50.140:FF:000002">
    <property type="entry name" value="Translation initiation factor IF-1"/>
    <property type="match status" value="1"/>
</dbReference>
<dbReference type="Gene3D" id="2.40.50.140">
    <property type="entry name" value="Nucleic acid-binding proteins"/>
    <property type="match status" value="1"/>
</dbReference>
<dbReference type="HAMAP" id="MF_00075">
    <property type="entry name" value="IF_1"/>
    <property type="match status" value="1"/>
</dbReference>
<dbReference type="InterPro" id="IPR012340">
    <property type="entry name" value="NA-bd_OB-fold"/>
</dbReference>
<dbReference type="InterPro" id="IPR006196">
    <property type="entry name" value="RNA-binding_domain_S1_IF1"/>
</dbReference>
<dbReference type="InterPro" id="IPR003029">
    <property type="entry name" value="S1_domain"/>
</dbReference>
<dbReference type="InterPro" id="IPR004368">
    <property type="entry name" value="TIF_IF1"/>
</dbReference>
<dbReference type="NCBIfam" id="TIGR00008">
    <property type="entry name" value="infA"/>
    <property type="match status" value="1"/>
</dbReference>
<dbReference type="PANTHER" id="PTHR33370">
    <property type="entry name" value="TRANSLATION INITIATION FACTOR IF-1, CHLOROPLASTIC"/>
    <property type="match status" value="1"/>
</dbReference>
<dbReference type="PANTHER" id="PTHR33370:SF1">
    <property type="entry name" value="TRANSLATION INITIATION FACTOR IF-1, CHLOROPLASTIC"/>
    <property type="match status" value="1"/>
</dbReference>
<dbReference type="Pfam" id="PF01176">
    <property type="entry name" value="eIF-1a"/>
    <property type="match status" value="1"/>
</dbReference>
<dbReference type="SMART" id="SM00316">
    <property type="entry name" value="S1"/>
    <property type="match status" value="1"/>
</dbReference>
<dbReference type="SUPFAM" id="SSF50249">
    <property type="entry name" value="Nucleic acid-binding proteins"/>
    <property type="match status" value="1"/>
</dbReference>
<dbReference type="PROSITE" id="PS50832">
    <property type="entry name" value="S1_IF1_TYPE"/>
    <property type="match status" value="1"/>
</dbReference>
<protein>
    <recommendedName>
        <fullName evidence="1">Translation initiation factor IF-1</fullName>
    </recommendedName>
</protein>
<keyword id="KW-0963">Cytoplasm</keyword>
<keyword id="KW-0396">Initiation factor</keyword>
<keyword id="KW-0648">Protein biosynthesis</keyword>
<keyword id="KW-1185">Reference proteome</keyword>
<keyword id="KW-0694">RNA-binding</keyword>
<keyword id="KW-0699">rRNA-binding</keyword>
<proteinExistence type="inferred from homology"/>
<organism>
    <name type="scientific">Francisella tularensis subsp. tularensis (strain SCHU S4 / Schu 4)</name>
    <dbReference type="NCBI Taxonomy" id="177416"/>
    <lineage>
        <taxon>Bacteria</taxon>
        <taxon>Pseudomonadati</taxon>
        <taxon>Pseudomonadota</taxon>
        <taxon>Gammaproteobacteria</taxon>
        <taxon>Thiotrichales</taxon>
        <taxon>Francisellaceae</taxon>
        <taxon>Francisella</taxon>
    </lineage>
</organism>
<name>IF1_FRATT</name>
<gene>
    <name evidence="1" type="primary">infA</name>
    <name type="ordered locus">FTT_0966</name>
</gene>